<protein>
    <recommendedName>
        <fullName evidence="6 7">Glutathione S-transferase S1</fullName>
        <ecNumber evidence="3 5">2.5.1.18</ecNumber>
    </recommendedName>
    <alternativeName>
        <fullName>GST class-sigma 1</fullName>
    </alternativeName>
    <alternativeName>
        <fullName>Glutathione S-transferase 2</fullName>
    </alternativeName>
</protein>
<sequence>MADEAQAPPAEGAPPAEGEAPPPAEGAEGAVEGGEAAPPAEPAEPIKHSYTLFYFNVKALAEPLRYLFAYGNQEYEDVRVTRDEWPALKPTMPMGQMPVLEVDGKRVHQSISMARFLAKTVGLCGATPWEDLQIDIVVDTINDFRLKIAVVSYEPEDEIKEKKLVTLNAEVIPFYLEKLEQTVKDNDGHLALGKLTWADVYFAGITDYMNYMVKRDLLEPYPALRGVVDAVNALEPIKAWIEKRPVTEV</sequence>
<gene>
    <name evidence="9" type="primary">GstS1</name>
    <name type="synonym">GST2</name>
    <name evidence="9" type="synonym">GSTS1-1</name>
    <name evidence="9" type="ORF">CG8938</name>
</gene>
<organism>
    <name type="scientific">Drosophila melanogaster</name>
    <name type="common">Fruit fly</name>
    <dbReference type="NCBI Taxonomy" id="7227"/>
    <lineage>
        <taxon>Eukaryota</taxon>
        <taxon>Metazoa</taxon>
        <taxon>Ecdysozoa</taxon>
        <taxon>Arthropoda</taxon>
        <taxon>Hexapoda</taxon>
        <taxon>Insecta</taxon>
        <taxon>Pterygota</taxon>
        <taxon>Neoptera</taxon>
        <taxon>Endopterygota</taxon>
        <taxon>Diptera</taxon>
        <taxon>Brachycera</taxon>
        <taxon>Muscomorpha</taxon>
        <taxon>Ephydroidea</taxon>
        <taxon>Drosophilidae</taxon>
        <taxon>Drosophila</taxon>
        <taxon>Sophophora</taxon>
    </lineage>
</organism>
<comment type="function">
    <text evidence="3 4 5">Conjugation of reduced glutathione to a wide number of exogenous and endogenous hydrophobic electrophiles (PubMed:22082028). May be involved in the detoxification of metabolites produced during cellular division and morphogenesis (PubMed:12547198, PubMed:1445191).</text>
</comment>
<comment type="catalytic activity">
    <reaction evidence="3 5">
        <text>RX + glutathione = an S-substituted glutathione + a halide anion + H(+)</text>
        <dbReference type="Rhea" id="RHEA:16437"/>
        <dbReference type="ChEBI" id="CHEBI:15378"/>
        <dbReference type="ChEBI" id="CHEBI:16042"/>
        <dbReference type="ChEBI" id="CHEBI:17792"/>
        <dbReference type="ChEBI" id="CHEBI:57925"/>
        <dbReference type="ChEBI" id="CHEBI:90779"/>
        <dbReference type="EC" id="2.5.1.18"/>
    </reaction>
</comment>
<comment type="biophysicochemical properties">
    <kinetics>
        <KM evidence="5">0.52 mM for glutathione</KM>
        <KM evidence="5">1.24 mM for 1-chloro-2,4-dinitrobenzene</KM>
        <Vmax evidence="5">4.53 umol/min/mg enzyme with 1-chloro-2,4-dinitrobenzene as substrate</Vmax>
        <Vmax evidence="5">2.81 umol/min/mg enzyme with 4-hydroxy-2-nonenal as substrate</Vmax>
        <Vmax evidence="5">84.3 nmol/min/mg enzyme with adrenochrome as substrate</Vmax>
        <Vmax evidence="5">0.112 umol/min/mg enzyme with phenethyl isothiocyanate as substrate</Vmax>
    </kinetics>
</comment>
<comment type="subunit">
    <text evidence="3">Homodimer.</text>
</comment>
<comment type="developmental stage">
    <text evidence="4">Expressed throughout development with highest levels being observed in nonfeeding stages, i.e. during embryonic and pupal development.</text>
</comment>
<comment type="similarity">
    <text evidence="7">Belongs to the GST superfamily. Sigma family.</text>
</comment>
<feature type="chain" id="PRO_0000185917" description="Glutathione S-transferase S1">
    <location>
        <begin position="1"/>
        <end position="249"/>
    </location>
</feature>
<feature type="domain" description="GST N-terminal">
    <location>
        <begin position="48"/>
        <end position="125"/>
    </location>
</feature>
<feature type="domain" description="GST C-terminal">
    <location>
        <begin position="127"/>
        <end position="249"/>
    </location>
</feature>
<feature type="region of interest" description="Disordered" evidence="2">
    <location>
        <begin position="1"/>
        <end position="42"/>
    </location>
</feature>
<feature type="compositionally biased region" description="Low complexity" evidence="2">
    <location>
        <begin position="1"/>
        <end position="38"/>
    </location>
</feature>
<feature type="binding site" evidence="3">
    <location>
        <position position="54"/>
    </location>
    <ligand>
        <name>glutathione</name>
        <dbReference type="ChEBI" id="CHEBI:57925"/>
    </ligand>
</feature>
<feature type="binding site" evidence="3">
    <location>
        <position position="85"/>
    </location>
    <ligand>
        <name>glutathione</name>
        <dbReference type="ChEBI" id="CHEBI:57925"/>
    </ligand>
</feature>
<feature type="binding site" evidence="1">
    <location>
        <position position="89"/>
    </location>
    <ligand>
        <name>glutathione</name>
        <dbReference type="ChEBI" id="CHEBI:57925"/>
    </ligand>
</feature>
<feature type="binding site">
    <location>
        <begin position="96"/>
        <end position="97"/>
    </location>
    <ligand>
        <name>glutathione</name>
        <dbReference type="ChEBI" id="CHEBI:57925"/>
    </ligand>
</feature>
<feature type="binding site">
    <location>
        <begin position="109"/>
        <end position="110"/>
    </location>
    <ligand>
        <name>glutathione</name>
        <dbReference type="ChEBI" id="CHEBI:57925"/>
    </ligand>
</feature>
<feature type="sequence conflict" description="In Ref. 1; AAA28596." evidence="8" ref="1">
    <original>AEPLRYLFAY</original>
    <variation>PSPCATCSD</variation>
    <location>
        <begin position="61"/>
        <end position="70"/>
    </location>
</feature>
<feature type="sequence conflict" description="In Ref. 1; AAA28596." evidence="8" ref="1">
    <original>RVTRDEW</original>
    <variation>AHPRRV</variation>
    <location>
        <begin position="79"/>
        <end position="85"/>
    </location>
</feature>
<feature type="sequence conflict" description="In Ref. 1; AAA28596." evidence="8" ref="1">
    <original>L</original>
    <variation>V</variation>
    <location>
        <position position="224"/>
    </location>
</feature>
<feature type="strand" evidence="10">
    <location>
        <begin position="50"/>
        <end position="58"/>
    </location>
</feature>
<feature type="helix" evidence="10">
    <location>
        <begin position="59"/>
        <end position="61"/>
    </location>
</feature>
<feature type="helix" evidence="10">
    <location>
        <begin position="62"/>
        <end position="71"/>
    </location>
</feature>
<feature type="strand" evidence="10">
    <location>
        <begin position="76"/>
        <end position="80"/>
    </location>
</feature>
<feature type="turn" evidence="10">
    <location>
        <begin position="82"/>
        <end position="84"/>
    </location>
</feature>
<feature type="helix" evidence="10">
    <location>
        <begin position="85"/>
        <end position="88"/>
    </location>
</feature>
<feature type="helix" evidence="10">
    <location>
        <begin position="89"/>
        <end position="91"/>
    </location>
</feature>
<feature type="helix" evidence="10">
    <location>
        <begin position="93"/>
        <end position="95"/>
    </location>
</feature>
<feature type="strand" evidence="10">
    <location>
        <begin position="99"/>
        <end position="102"/>
    </location>
</feature>
<feature type="strand" evidence="10">
    <location>
        <begin position="105"/>
        <end position="108"/>
    </location>
</feature>
<feature type="helix" evidence="10">
    <location>
        <begin position="110"/>
        <end position="121"/>
    </location>
</feature>
<feature type="helix" evidence="10">
    <location>
        <begin position="128"/>
        <end position="152"/>
    </location>
</feature>
<feature type="helix" evidence="10">
    <location>
        <begin position="157"/>
        <end position="169"/>
    </location>
</feature>
<feature type="helix" evidence="10">
    <location>
        <begin position="171"/>
        <end position="185"/>
    </location>
</feature>
<feature type="strand" evidence="10">
    <location>
        <begin position="188"/>
        <end position="191"/>
    </location>
</feature>
<feature type="helix" evidence="10">
    <location>
        <begin position="197"/>
        <end position="213"/>
    </location>
</feature>
<feature type="turn" evidence="10">
    <location>
        <begin position="217"/>
        <end position="220"/>
    </location>
</feature>
<feature type="helix" evidence="10">
    <location>
        <begin position="222"/>
        <end position="232"/>
    </location>
</feature>
<feature type="helix" evidence="10">
    <location>
        <begin position="235"/>
        <end position="243"/>
    </location>
</feature>
<name>GSTS1_DROME</name>
<accession>P41043</accession>
<accession>Q0E945</accession>
<accession>Q9V7Y4</accession>
<keyword id="KW-0002">3D-structure</keyword>
<keyword id="KW-0216">Detoxification</keyword>
<keyword id="KW-1185">Reference proteome</keyword>
<keyword id="KW-0808">Transferase</keyword>
<reference key="1">
    <citation type="journal article" date="1992" name="Biochem. Genet.">
        <title>Isolation of a Drosophila gene encoding glutathione S-transferase.</title>
        <authorList>
            <person name="Beall C."/>
            <person name="Fyrberg C."/>
            <person name="Song S."/>
            <person name="Fyrberg E."/>
        </authorList>
    </citation>
    <scope>NUCLEOTIDE SEQUENCE [MRNA]</scope>
    <scope>FUNCTION</scope>
    <scope>DEVELOPMENTAL STAGE</scope>
</reference>
<reference key="2">
    <citation type="journal article" date="2000" name="Science">
        <title>The genome sequence of Drosophila melanogaster.</title>
        <authorList>
            <person name="Adams M.D."/>
            <person name="Celniker S.E."/>
            <person name="Holt R.A."/>
            <person name="Evans C.A."/>
            <person name="Gocayne J.D."/>
            <person name="Amanatides P.G."/>
            <person name="Scherer S.E."/>
            <person name="Li P.W."/>
            <person name="Hoskins R.A."/>
            <person name="Galle R.F."/>
            <person name="George R.A."/>
            <person name="Lewis S.E."/>
            <person name="Richards S."/>
            <person name="Ashburner M."/>
            <person name="Henderson S.N."/>
            <person name="Sutton G.G."/>
            <person name="Wortman J.R."/>
            <person name="Yandell M.D."/>
            <person name="Zhang Q."/>
            <person name="Chen L.X."/>
            <person name="Brandon R.C."/>
            <person name="Rogers Y.-H.C."/>
            <person name="Blazej R.G."/>
            <person name="Champe M."/>
            <person name="Pfeiffer B.D."/>
            <person name="Wan K.H."/>
            <person name="Doyle C."/>
            <person name="Baxter E.G."/>
            <person name="Helt G."/>
            <person name="Nelson C.R."/>
            <person name="Miklos G.L.G."/>
            <person name="Abril J.F."/>
            <person name="Agbayani A."/>
            <person name="An H.-J."/>
            <person name="Andrews-Pfannkoch C."/>
            <person name="Baldwin D."/>
            <person name="Ballew R.M."/>
            <person name="Basu A."/>
            <person name="Baxendale J."/>
            <person name="Bayraktaroglu L."/>
            <person name="Beasley E.M."/>
            <person name="Beeson K.Y."/>
            <person name="Benos P.V."/>
            <person name="Berman B.P."/>
            <person name="Bhandari D."/>
            <person name="Bolshakov S."/>
            <person name="Borkova D."/>
            <person name="Botchan M.R."/>
            <person name="Bouck J."/>
            <person name="Brokstein P."/>
            <person name="Brottier P."/>
            <person name="Burtis K.C."/>
            <person name="Busam D.A."/>
            <person name="Butler H."/>
            <person name="Cadieu E."/>
            <person name="Center A."/>
            <person name="Chandra I."/>
            <person name="Cherry J.M."/>
            <person name="Cawley S."/>
            <person name="Dahlke C."/>
            <person name="Davenport L.B."/>
            <person name="Davies P."/>
            <person name="de Pablos B."/>
            <person name="Delcher A."/>
            <person name="Deng Z."/>
            <person name="Mays A.D."/>
            <person name="Dew I."/>
            <person name="Dietz S.M."/>
            <person name="Dodson K."/>
            <person name="Doup L.E."/>
            <person name="Downes M."/>
            <person name="Dugan-Rocha S."/>
            <person name="Dunkov B.C."/>
            <person name="Dunn P."/>
            <person name="Durbin K.J."/>
            <person name="Evangelista C.C."/>
            <person name="Ferraz C."/>
            <person name="Ferriera S."/>
            <person name="Fleischmann W."/>
            <person name="Fosler C."/>
            <person name="Gabrielian A.E."/>
            <person name="Garg N.S."/>
            <person name="Gelbart W.M."/>
            <person name="Glasser K."/>
            <person name="Glodek A."/>
            <person name="Gong F."/>
            <person name="Gorrell J.H."/>
            <person name="Gu Z."/>
            <person name="Guan P."/>
            <person name="Harris M."/>
            <person name="Harris N.L."/>
            <person name="Harvey D.A."/>
            <person name="Heiman T.J."/>
            <person name="Hernandez J.R."/>
            <person name="Houck J."/>
            <person name="Hostin D."/>
            <person name="Houston K.A."/>
            <person name="Howland T.J."/>
            <person name="Wei M.-H."/>
            <person name="Ibegwam C."/>
            <person name="Jalali M."/>
            <person name="Kalush F."/>
            <person name="Karpen G.H."/>
            <person name="Ke Z."/>
            <person name="Kennison J.A."/>
            <person name="Ketchum K.A."/>
            <person name="Kimmel B.E."/>
            <person name="Kodira C.D."/>
            <person name="Kraft C.L."/>
            <person name="Kravitz S."/>
            <person name="Kulp D."/>
            <person name="Lai Z."/>
            <person name="Lasko P."/>
            <person name="Lei Y."/>
            <person name="Levitsky A.A."/>
            <person name="Li J.H."/>
            <person name="Li Z."/>
            <person name="Liang Y."/>
            <person name="Lin X."/>
            <person name="Liu X."/>
            <person name="Mattei B."/>
            <person name="McIntosh T.C."/>
            <person name="McLeod M.P."/>
            <person name="McPherson D."/>
            <person name="Merkulov G."/>
            <person name="Milshina N.V."/>
            <person name="Mobarry C."/>
            <person name="Morris J."/>
            <person name="Moshrefi A."/>
            <person name="Mount S.M."/>
            <person name="Moy M."/>
            <person name="Murphy B."/>
            <person name="Murphy L."/>
            <person name="Muzny D.M."/>
            <person name="Nelson D.L."/>
            <person name="Nelson D.R."/>
            <person name="Nelson K.A."/>
            <person name="Nixon K."/>
            <person name="Nusskern D.R."/>
            <person name="Pacleb J.M."/>
            <person name="Palazzolo M."/>
            <person name="Pittman G.S."/>
            <person name="Pan S."/>
            <person name="Pollard J."/>
            <person name="Puri V."/>
            <person name="Reese M.G."/>
            <person name="Reinert K."/>
            <person name="Remington K."/>
            <person name="Saunders R.D.C."/>
            <person name="Scheeler F."/>
            <person name="Shen H."/>
            <person name="Shue B.C."/>
            <person name="Siden-Kiamos I."/>
            <person name="Simpson M."/>
            <person name="Skupski M.P."/>
            <person name="Smith T.J."/>
            <person name="Spier E."/>
            <person name="Spradling A.C."/>
            <person name="Stapleton M."/>
            <person name="Strong R."/>
            <person name="Sun E."/>
            <person name="Svirskas R."/>
            <person name="Tector C."/>
            <person name="Turner R."/>
            <person name="Venter E."/>
            <person name="Wang A.H."/>
            <person name="Wang X."/>
            <person name="Wang Z.-Y."/>
            <person name="Wassarman D.A."/>
            <person name="Weinstock G.M."/>
            <person name="Weissenbach J."/>
            <person name="Williams S.M."/>
            <person name="Woodage T."/>
            <person name="Worley K.C."/>
            <person name="Wu D."/>
            <person name="Yang S."/>
            <person name="Yao Q.A."/>
            <person name="Ye J."/>
            <person name="Yeh R.-F."/>
            <person name="Zaveri J.S."/>
            <person name="Zhan M."/>
            <person name="Zhang G."/>
            <person name="Zhao Q."/>
            <person name="Zheng L."/>
            <person name="Zheng X.H."/>
            <person name="Zhong F.N."/>
            <person name="Zhong W."/>
            <person name="Zhou X."/>
            <person name="Zhu S.C."/>
            <person name="Zhu X."/>
            <person name="Smith H.O."/>
            <person name="Gibbs R.A."/>
            <person name="Myers E.W."/>
            <person name="Rubin G.M."/>
            <person name="Venter J.C."/>
        </authorList>
    </citation>
    <scope>NUCLEOTIDE SEQUENCE [LARGE SCALE GENOMIC DNA]</scope>
    <source>
        <strain>Berkeley</strain>
    </source>
</reference>
<reference key="3">
    <citation type="journal article" date="2002" name="Genome Biol.">
        <title>Annotation of the Drosophila melanogaster euchromatic genome: a systematic review.</title>
        <authorList>
            <person name="Misra S."/>
            <person name="Crosby M.A."/>
            <person name="Mungall C.J."/>
            <person name="Matthews B.B."/>
            <person name="Campbell K.S."/>
            <person name="Hradecky P."/>
            <person name="Huang Y."/>
            <person name="Kaminker J.S."/>
            <person name="Millburn G.H."/>
            <person name="Prochnik S.E."/>
            <person name="Smith C.D."/>
            <person name="Tupy J.L."/>
            <person name="Whitfield E.J."/>
            <person name="Bayraktaroglu L."/>
            <person name="Berman B.P."/>
            <person name="Bettencourt B.R."/>
            <person name="Celniker S.E."/>
            <person name="de Grey A.D.N.J."/>
            <person name="Drysdale R.A."/>
            <person name="Harris N.L."/>
            <person name="Richter J."/>
            <person name="Russo S."/>
            <person name="Schroeder A.J."/>
            <person name="Shu S.Q."/>
            <person name="Stapleton M."/>
            <person name="Yamada C."/>
            <person name="Ashburner M."/>
            <person name="Gelbart W.M."/>
            <person name="Rubin G.M."/>
            <person name="Lewis S.E."/>
        </authorList>
    </citation>
    <scope>GENOME REANNOTATION</scope>
    <source>
        <strain>Berkeley</strain>
    </source>
</reference>
<reference key="4">
    <citation type="journal article" date="2002" name="Genome Biol.">
        <title>A Drosophila full-length cDNA resource.</title>
        <authorList>
            <person name="Stapleton M."/>
            <person name="Carlson J.W."/>
            <person name="Brokstein P."/>
            <person name="Yu C."/>
            <person name="Champe M."/>
            <person name="George R.A."/>
            <person name="Guarin H."/>
            <person name="Kronmiller B."/>
            <person name="Pacleb J.M."/>
            <person name="Park S."/>
            <person name="Wan K.H."/>
            <person name="Rubin G.M."/>
            <person name="Celniker S.E."/>
        </authorList>
    </citation>
    <scope>NUCLEOTIDE SEQUENCE [LARGE SCALE MRNA]</scope>
    <source>
        <strain>Berkeley</strain>
        <tissue>Embryo</tissue>
    </source>
</reference>
<reference key="5">
    <citation type="journal article" date="2012" name="Biochem. J.">
        <title>A preliminary characterization of the cytosolic glutathione transferase proteome from Drosophila melanogaster.</title>
        <authorList>
            <person name="Saisawang C."/>
            <person name="Wongsantichon J."/>
            <person name="Ketterman A.J."/>
        </authorList>
    </citation>
    <scope>FUNCTION</scope>
    <scope>CATALYTIC ACTIVITY</scope>
    <scope>BIOPHYSICOCHEMICAL PROPERTIES</scope>
</reference>
<reference key="6">
    <citation type="journal article" date="2003" name="J. Mol. Biol.">
        <title>Structure of a Drosophila sigma class glutathione S-transferase reveals a novel active site topography suited for lipid peroxidation products.</title>
        <authorList>
            <person name="Agianian B."/>
            <person name="Tucker P.A."/>
            <person name="Schouten A."/>
            <person name="Leonard K."/>
            <person name="Bullard B."/>
            <person name="Gros P."/>
        </authorList>
    </citation>
    <scope>X-RAY CRYSTALLOGRAPHY (1.75 ANGSTROMS) IN COMPLEX WITH GLUTATHIONE</scope>
    <scope>FUNCTION</scope>
    <scope>SUBUNIT</scope>
    <scope>CATALYTIC ACTIVITY</scope>
</reference>
<dbReference type="EC" id="2.5.1.18" evidence="3 5"/>
<dbReference type="EMBL" id="M95198">
    <property type="protein sequence ID" value="AAA28596.1"/>
    <property type="molecule type" value="mRNA"/>
</dbReference>
<dbReference type="EMBL" id="AE013599">
    <property type="protein sequence ID" value="AAF57901.1"/>
    <property type="molecule type" value="Genomic_DNA"/>
</dbReference>
<dbReference type="EMBL" id="AY118328">
    <property type="protein sequence ID" value="AAM48357.1"/>
    <property type="molecule type" value="mRNA"/>
</dbReference>
<dbReference type="PIR" id="A48982">
    <property type="entry name" value="A48982"/>
</dbReference>
<dbReference type="RefSeq" id="NP_523767.2">
    <property type="nucleotide sequence ID" value="NM_079043.3"/>
</dbReference>
<dbReference type="RefSeq" id="NP_725653.1">
    <property type="nucleotide sequence ID" value="NM_166216.2"/>
</dbReference>
<dbReference type="RefSeq" id="NP_725654.1">
    <property type="nucleotide sequence ID" value="NM_166217.3"/>
</dbReference>
<dbReference type="PDB" id="1M0U">
    <property type="method" value="X-ray"/>
    <property type="resolution" value="1.75 A"/>
    <property type="chains" value="A/B=1-249"/>
</dbReference>
<dbReference type="PDBsum" id="1M0U"/>
<dbReference type="SMR" id="P41043"/>
<dbReference type="BioGRID" id="62625">
    <property type="interactions" value="33"/>
</dbReference>
<dbReference type="DIP" id="DIP-21396N"/>
<dbReference type="FunCoup" id="P41043">
    <property type="interactions" value="400"/>
</dbReference>
<dbReference type="IntAct" id="P41043">
    <property type="interactions" value="28"/>
</dbReference>
<dbReference type="STRING" id="7227.FBpp0305731"/>
<dbReference type="PaxDb" id="7227-FBpp0305731"/>
<dbReference type="DNASU" id="36927"/>
<dbReference type="EnsemblMetazoa" id="FBtr0087005">
    <property type="protein sequence ID" value="FBpp0086156"/>
    <property type="gene ID" value="FBgn0010226"/>
</dbReference>
<dbReference type="EnsemblMetazoa" id="FBtr0087006">
    <property type="protein sequence ID" value="FBpp0086157"/>
    <property type="gene ID" value="FBgn0010226"/>
</dbReference>
<dbReference type="EnsemblMetazoa" id="FBtr0100258">
    <property type="protein sequence ID" value="FBpp0099646"/>
    <property type="gene ID" value="FBgn0010226"/>
</dbReference>
<dbReference type="GeneID" id="36927"/>
<dbReference type="KEGG" id="dme:Dmel_CG8938"/>
<dbReference type="AGR" id="FB:FBgn0010226"/>
<dbReference type="CTD" id="36927"/>
<dbReference type="FlyBase" id="FBgn0010226">
    <property type="gene designation" value="GstS1"/>
</dbReference>
<dbReference type="VEuPathDB" id="VectorBase:FBgn0010226"/>
<dbReference type="eggNOG" id="KOG1695">
    <property type="taxonomic scope" value="Eukaryota"/>
</dbReference>
<dbReference type="GeneTree" id="ENSGT00940000160278"/>
<dbReference type="HOGENOM" id="CLU_039475_1_0_1"/>
<dbReference type="InParanoid" id="P41043"/>
<dbReference type="OrthoDB" id="414243at2759"/>
<dbReference type="PhylomeDB" id="P41043"/>
<dbReference type="Reactome" id="R-DME-156590">
    <property type="pathway name" value="Glutathione conjugation"/>
</dbReference>
<dbReference type="Reactome" id="R-DME-2162123">
    <property type="pathway name" value="Synthesis of Prostaglandins (PG) and Thromboxanes (TX)"/>
</dbReference>
<dbReference type="SABIO-RK" id="P41043"/>
<dbReference type="SignaLink" id="P41043"/>
<dbReference type="BioGRID-ORCS" id="36927">
    <property type="hits" value="0 hits in 3 CRISPR screens"/>
</dbReference>
<dbReference type="ChiTaRS" id="GstS1">
    <property type="organism name" value="fly"/>
</dbReference>
<dbReference type="EvolutionaryTrace" id="P41043"/>
<dbReference type="GenomeRNAi" id="36927"/>
<dbReference type="PRO" id="PR:P41043"/>
<dbReference type="Proteomes" id="UP000000803">
    <property type="component" value="Chromosome 2R"/>
</dbReference>
<dbReference type="Bgee" id="FBgn0010226">
    <property type="expression patterns" value="Expressed in spermatocyte cyst cell (Drosophila) in testis and 174 other cell types or tissues"/>
</dbReference>
<dbReference type="ExpressionAtlas" id="P41043">
    <property type="expression patterns" value="baseline and differential"/>
</dbReference>
<dbReference type="GO" id="GO:0005737">
    <property type="term" value="C:cytoplasm"/>
    <property type="evidence" value="ECO:0000250"/>
    <property type="project" value="FlyBase"/>
</dbReference>
<dbReference type="GO" id="GO:0004602">
    <property type="term" value="F:glutathione peroxidase activity"/>
    <property type="evidence" value="ECO:0000314"/>
    <property type="project" value="FlyBase"/>
</dbReference>
<dbReference type="GO" id="GO:0004364">
    <property type="term" value="F:glutathione transferase activity"/>
    <property type="evidence" value="ECO:0000314"/>
    <property type="project" value="FlyBase"/>
</dbReference>
<dbReference type="GO" id="GO:0004667">
    <property type="term" value="F:prostaglandin-D synthase activity"/>
    <property type="evidence" value="ECO:0000250"/>
    <property type="project" value="FlyBase"/>
</dbReference>
<dbReference type="GO" id="GO:0006749">
    <property type="term" value="P:glutathione metabolic process"/>
    <property type="evidence" value="ECO:0000314"/>
    <property type="project" value="FlyBase"/>
</dbReference>
<dbReference type="CDD" id="cd03192">
    <property type="entry name" value="GST_C_Sigma_like"/>
    <property type="match status" value="1"/>
</dbReference>
<dbReference type="CDD" id="cd03039">
    <property type="entry name" value="GST_N_Sigma_like"/>
    <property type="match status" value="1"/>
</dbReference>
<dbReference type="FunFam" id="1.20.1050.10:FF:000030">
    <property type="entry name" value="Glutathione S-transferase S1"/>
    <property type="match status" value="1"/>
</dbReference>
<dbReference type="FunFam" id="3.40.30.10:FF:000035">
    <property type="entry name" value="hematopoietic prostaglandin D synthase"/>
    <property type="match status" value="1"/>
</dbReference>
<dbReference type="Gene3D" id="1.20.1050.10">
    <property type="match status" value="1"/>
</dbReference>
<dbReference type="Gene3D" id="3.40.30.10">
    <property type="entry name" value="Glutaredoxin"/>
    <property type="match status" value="1"/>
</dbReference>
<dbReference type="InterPro" id="IPR010987">
    <property type="entry name" value="Glutathione-S-Trfase_C-like"/>
</dbReference>
<dbReference type="InterPro" id="IPR036282">
    <property type="entry name" value="Glutathione-S-Trfase_C_sf"/>
</dbReference>
<dbReference type="InterPro" id="IPR040079">
    <property type="entry name" value="Glutathione_S-Trfase"/>
</dbReference>
<dbReference type="InterPro" id="IPR004045">
    <property type="entry name" value="Glutathione_S-Trfase_N"/>
</dbReference>
<dbReference type="InterPro" id="IPR004046">
    <property type="entry name" value="GST_C"/>
</dbReference>
<dbReference type="InterPro" id="IPR050213">
    <property type="entry name" value="GST_superfamily"/>
</dbReference>
<dbReference type="InterPro" id="IPR036249">
    <property type="entry name" value="Thioredoxin-like_sf"/>
</dbReference>
<dbReference type="PANTHER" id="PTHR11571">
    <property type="entry name" value="GLUTATHIONE S-TRANSFERASE"/>
    <property type="match status" value="1"/>
</dbReference>
<dbReference type="PANTHER" id="PTHR11571:SF224">
    <property type="entry name" value="HEMATOPOIETIC PROSTAGLANDIN D SYNTHASE"/>
    <property type="match status" value="1"/>
</dbReference>
<dbReference type="Pfam" id="PF14497">
    <property type="entry name" value="GST_C_3"/>
    <property type="match status" value="1"/>
</dbReference>
<dbReference type="Pfam" id="PF02798">
    <property type="entry name" value="GST_N"/>
    <property type="match status" value="1"/>
</dbReference>
<dbReference type="SFLD" id="SFLDG01205">
    <property type="entry name" value="AMPS.1"/>
    <property type="match status" value="1"/>
</dbReference>
<dbReference type="SFLD" id="SFLDS00019">
    <property type="entry name" value="Glutathione_Transferase_(cytos"/>
    <property type="match status" value="1"/>
</dbReference>
<dbReference type="SUPFAM" id="SSF47616">
    <property type="entry name" value="GST C-terminal domain-like"/>
    <property type="match status" value="1"/>
</dbReference>
<dbReference type="SUPFAM" id="SSF52833">
    <property type="entry name" value="Thioredoxin-like"/>
    <property type="match status" value="1"/>
</dbReference>
<dbReference type="PROSITE" id="PS50405">
    <property type="entry name" value="GST_CTER"/>
    <property type="match status" value="1"/>
</dbReference>
<dbReference type="PROSITE" id="PS50404">
    <property type="entry name" value="GST_NTER"/>
    <property type="match status" value="1"/>
</dbReference>
<evidence type="ECO:0000250" key="1"/>
<evidence type="ECO:0000256" key="2">
    <source>
        <dbReference type="SAM" id="MobiDB-lite"/>
    </source>
</evidence>
<evidence type="ECO:0000269" key="3">
    <source>
    </source>
</evidence>
<evidence type="ECO:0000269" key="4">
    <source>
    </source>
</evidence>
<evidence type="ECO:0000269" key="5">
    <source>
    </source>
</evidence>
<evidence type="ECO:0000303" key="6">
    <source>
    </source>
</evidence>
<evidence type="ECO:0000303" key="7">
    <source>
    </source>
</evidence>
<evidence type="ECO:0000305" key="8"/>
<evidence type="ECO:0000312" key="9">
    <source>
        <dbReference type="FlyBase" id="FBgn0010226"/>
    </source>
</evidence>
<evidence type="ECO:0007829" key="10">
    <source>
        <dbReference type="PDB" id="1M0U"/>
    </source>
</evidence>
<proteinExistence type="evidence at protein level"/>